<proteinExistence type="inferred from homology"/>
<feature type="signal peptide" evidence="2">
    <location>
        <begin position="1"/>
        <end position="20"/>
    </location>
</feature>
<feature type="chain" id="PRO_0000352713" description="Beta-defensin 33">
    <location>
        <begin position="21"/>
        <end position="62"/>
    </location>
</feature>
<feature type="disulfide bond" evidence="1">
    <location>
        <begin position="30"/>
        <end position="59"/>
    </location>
</feature>
<feature type="disulfide bond" evidence="1">
    <location>
        <begin position="37"/>
        <end position="52"/>
    </location>
</feature>
<feature type="disulfide bond" evidence="1">
    <location>
        <begin position="45"/>
        <end position="60"/>
    </location>
</feature>
<evidence type="ECO:0000250" key="1"/>
<evidence type="ECO:0000255" key="2"/>
<evidence type="ECO:0000305" key="3"/>
<accession>Q32ZG1</accession>
<organism>
    <name type="scientific">Rattus norvegicus</name>
    <name type="common">Rat</name>
    <dbReference type="NCBI Taxonomy" id="10116"/>
    <lineage>
        <taxon>Eukaryota</taxon>
        <taxon>Metazoa</taxon>
        <taxon>Chordata</taxon>
        <taxon>Craniata</taxon>
        <taxon>Vertebrata</taxon>
        <taxon>Euteleostomi</taxon>
        <taxon>Mammalia</taxon>
        <taxon>Eutheria</taxon>
        <taxon>Euarchontoglires</taxon>
        <taxon>Glires</taxon>
        <taxon>Rodentia</taxon>
        <taxon>Myomorpha</taxon>
        <taxon>Muroidea</taxon>
        <taxon>Muridae</taxon>
        <taxon>Murinae</taxon>
        <taxon>Rattus</taxon>
    </lineage>
</organism>
<dbReference type="EMBL" id="AY621362">
    <property type="protein sequence ID" value="AAT51901.1"/>
    <property type="molecule type" value="mRNA"/>
</dbReference>
<dbReference type="RefSeq" id="NP_001032612.1">
    <property type="nucleotide sequence ID" value="NM_001037523.2"/>
</dbReference>
<dbReference type="RefSeq" id="XP_038950736.1">
    <property type="nucleotide sequence ID" value="XM_039094808.2"/>
</dbReference>
<dbReference type="SMR" id="Q32ZG1"/>
<dbReference type="STRING" id="10116.ENSRNOP00000054840"/>
<dbReference type="PaxDb" id="10116-ENSRNOP00000054840"/>
<dbReference type="GeneID" id="641647"/>
<dbReference type="KEGG" id="rno:641647"/>
<dbReference type="UCSC" id="RGD:1562959">
    <property type="organism name" value="rat"/>
</dbReference>
<dbReference type="AGR" id="RGD:1562959"/>
<dbReference type="CTD" id="654453"/>
<dbReference type="RGD" id="1562959">
    <property type="gene designation" value="Defb33"/>
</dbReference>
<dbReference type="VEuPathDB" id="HostDB:ENSRNOG00000038128"/>
<dbReference type="eggNOG" id="ENOG502TDWQ">
    <property type="taxonomic scope" value="Eukaryota"/>
</dbReference>
<dbReference type="HOGENOM" id="CLU_2921888_0_0_1"/>
<dbReference type="InParanoid" id="Q32ZG1"/>
<dbReference type="PhylomeDB" id="Q32ZG1"/>
<dbReference type="PRO" id="PR:Q32ZG1"/>
<dbReference type="Proteomes" id="UP000002494">
    <property type="component" value="Chromosome 16"/>
</dbReference>
<dbReference type="Bgee" id="ENSRNOG00000038128">
    <property type="expression patterns" value="Expressed in testis"/>
</dbReference>
<dbReference type="GO" id="GO:0005615">
    <property type="term" value="C:extracellular space"/>
    <property type="evidence" value="ECO:0000318"/>
    <property type="project" value="GO_Central"/>
</dbReference>
<dbReference type="GO" id="GO:0031731">
    <property type="term" value="F:CCR6 chemokine receptor binding"/>
    <property type="evidence" value="ECO:0000318"/>
    <property type="project" value="GO_Central"/>
</dbReference>
<dbReference type="GO" id="GO:0042056">
    <property type="term" value="F:chemoattractant activity"/>
    <property type="evidence" value="ECO:0000318"/>
    <property type="project" value="GO_Central"/>
</dbReference>
<dbReference type="GO" id="GO:0060326">
    <property type="term" value="P:cell chemotaxis"/>
    <property type="evidence" value="ECO:0000318"/>
    <property type="project" value="GO_Central"/>
</dbReference>
<dbReference type="GO" id="GO:0042742">
    <property type="term" value="P:defense response to bacterium"/>
    <property type="evidence" value="ECO:0000318"/>
    <property type="project" value="GO_Central"/>
</dbReference>
<dbReference type="PANTHER" id="PTHR20515">
    <property type="entry name" value="BETA-DEFENSIN"/>
    <property type="match status" value="1"/>
</dbReference>
<dbReference type="PANTHER" id="PTHR20515:SF4">
    <property type="entry name" value="BETA-DEFENSIN 33"/>
    <property type="match status" value="1"/>
</dbReference>
<comment type="function">
    <text evidence="1">Has antibacterial activity.</text>
</comment>
<comment type="subcellular location">
    <subcellularLocation>
        <location evidence="1">Secreted</location>
    </subcellularLocation>
</comment>
<comment type="similarity">
    <text evidence="3">Belongs to the beta-defensin family.</text>
</comment>
<name>DFB33_RAT</name>
<protein>
    <recommendedName>
        <fullName>Beta-defensin 33</fullName>
        <shortName>BD-33</shortName>
    </recommendedName>
    <alternativeName>
        <fullName>Defensin, beta 33</fullName>
    </alternativeName>
</protein>
<reference key="1">
    <citation type="journal article" date="2005" name="Physiol. Genomics">
        <title>Cross-species analysis of the mammalian beta-defensin gene family: presence of syntenic gene clusters and preferential expression in the male reproductive tract.</title>
        <authorList>
            <person name="Patil A.A."/>
            <person name="Cai Y."/>
            <person name="Sang Y."/>
            <person name="Blecha F."/>
            <person name="Zhang G."/>
        </authorList>
    </citation>
    <scope>NUCLEOTIDE SEQUENCE [MRNA]</scope>
</reference>
<sequence>MRLLFLLFLLLVCLAQKTSGRKRNTKFRQCEKMGGICKYQKTHGCSILPAECKSRYKHCCRL</sequence>
<gene>
    <name type="primary">Defb33</name>
</gene>
<keyword id="KW-0044">Antibiotic</keyword>
<keyword id="KW-0929">Antimicrobial</keyword>
<keyword id="KW-0211">Defensin</keyword>
<keyword id="KW-1015">Disulfide bond</keyword>
<keyword id="KW-1185">Reference proteome</keyword>
<keyword id="KW-0964">Secreted</keyword>
<keyword id="KW-0732">Signal</keyword>